<organism>
    <name type="scientific">Rhizobium etli (strain ATCC 51251 / DSM 11541 / JCM 21823 / NBRC 15573 / CFN 42)</name>
    <dbReference type="NCBI Taxonomy" id="347834"/>
    <lineage>
        <taxon>Bacteria</taxon>
        <taxon>Pseudomonadati</taxon>
        <taxon>Pseudomonadota</taxon>
        <taxon>Alphaproteobacteria</taxon>
        <taxon>Hyphomicrobiales</taxon>
        <taxon>Rhizobiaceae</taxon>
        <taxon>Rhizobium/Agrobacterium group</taxon>
        <taxon>Rhizobium</taxon>
    </lineage>
</organism>
<name>URE3_RHIEC</name>
<evidence type="ECO:0000255" key="1">
    <source>
        <dbReference type="HAMAP-Rule" id="MF_00739"/>
    </source>
</evidence>
<dbReference type="EC" id="3.5.1.5" evidence="1"/>
<dbReference type="EMBL" id="CP000133">
    <property type="protein sequence ID" value="ABC92074.1"/>
    <property type="molecule type" value="Genomic_DNA"/>
</dbReference>
<dbReference type="RefSeq" id="WP_011426544.1">
    <property type="nucleotide sequence ID" value="NC_007761.1"/>
</dbReference>
<dbReference type="SMR" id="Q2K512"/>
<dbReference type="KEGG" id="ret:RHE_CH03310"/>
<dbReference type="eggNOG" id="COG0831">
    <property type="taxonomic scope" value="Bacteria"/>
</dbReference>
<dbReference type="HOGENOM" id="CLU_145825_1_0_5"/>
<dbReference type="OrthoDB" id="9797217at2"/>
<dbReference type="UniPathway" id="UPA00258">
    <property type="reaction ID" value="UER00370"/>
</dbReference>
<dbReference type="Proteomes" id="UP000001936">
    <property type="component" value="Chromosome"/>
</dbReference>
<dbReference type="GO" id="GO:0005737">
    <property type="term" value="C:cytoplasm"/>
    <property type="evidence" value="ECO:0007669"/>
    <property type="project" value="UniProtKB-SubCell"/>
</dbReference>
<dbReference type="GO" id="GO:0016151">
    <property type="term" value="F:nickel cation binding"/>
    <property type="evidence" value="ECO:0007669"/>
    <property type="project" value="InterPro"/>
</dbReference>
<dbReference type="GO" id="GO:0009039">
    <property type="term" value="F:urease activity"/>
    <property type="evidence" value="ECO:0007669"/>
    <property type="project" value="UniProtKB-UniRule"/>
</dbReference>
<dbReference type="GO" id="GO:0043419">
    <property type="term" value="P:urea catabolic process"/>
    <property type="evidence" value="ECO:0007669"/>
    <property type="project" value="UniProtKB-UniRule"/>
</dbReference>
<dbReference type="CDD" id="cd00390">
    <property type="entry name" value="Urease_gamma"/>
    <property type="match status" value="1"/>
</dbReference>
<dbReference type="Gene3D" id="3.30.280.10">
    <property type="entry name" value="Urease, gamma-like subunit"/>
    <property type="match status" value="1"/>
</dbReference>
<dbReference type="HAMAP" id="MF_00739">
    <property type="entry name" value="Urease_gamma"/>
    <property type="match status" value="1"/>
</dbReference>
<dbReference type="InterPro" id="IPR012010">
    <property type="entry name" value="Urease_gamma"/>
</dbReference>
<dbReference type="InterPro" id="IPR002026">
    <property type="entry name" value="Urease_gamma/gamma-beta_su"/>
</dbReference>
<dbReference type="InterPro" id="IPR036463">
    <property type="entry name" value="Urease_gamma_sf"/>
</dbReference>
<dbReference type="InterPro" id="IPR050069">
    <property type="entry name" value="Urease_subunit"/>
</dbReference>
<dbReference type="NCBIfam" id="NF009712">
    <property type="entry name" value="PRK13241.1"/>
    <property type="match status" value="1"/>
</dbReference>
<dbReference type="NCBIfam" id="TIGR00193">
    <property type="entry name" value="urease_gam"/>
    <property type="match status" value="1"/>
</dbReference>
<dbReference type="PANTHER" id="PTHR33569">
    <property type="entry name" value="UREASE"/>
    <property type="match status" value="1"/>
</dbReference>
<dbReference type="PANTHER" id="PTHR33569:SF1">
    <property type="entry name" value="UREASE"/>
    <property type="match status" value="1"/>
</dbReference>
<dbReference type="Pfam" id="PF00547">
    <property type="entry name" value="Urease_gamma"/>
    <property type="match status" value="1"/>
</dbReference>
<dbReference type="PIRSF" id="PIRSF001223">
    <property type="entry name" value="Urease_gamma"/>
    <property type="match status" value="1"/>
</dbReference>
<dbReference type="SUPFAM" id="SSF54111">
    <property type="entry name" value="Urease, gamma-subunit"/>
    <property type="match status" value="1"/>
</dbReference>
<comment type="catalytic activity">
    <reaction evidence="1">
        <text>urea + 2 H2O + H(+) = hydrogencarbonate + 2 NH4(+)</text>
        <dbReference type="Rhea" id="RHEA:20557"/>
        <dbReference type="ChEBI" id="CHEBI:15377"/>
        <dbReference type="ChEBI" id="CHEBI:15378"/>
        <dbReference type="ChEBI" id="CHEBI:16199"/>
        <dbReference type="ChEBI" id="CHEBI:17544"/>
        <dbReference type="ChEBI" id="CHEBI:28938"/>
        <dbReference type="EC" id="3.5.1.5"/>
    </reaction>
</comment>
<comment type="pathway">
    <text evidence="1">Nitrogen metabolism; urea degradation; CO(2) and NH(3) from urea (urease route): step 1/1.</text>
</comment>
<comment type="subunit">
    <text evidence="1">Heterotrimer of UreA (gamma), UreB (beta) and UreC (alpha) subunits. Three heterotrimers associate to form the active enzyme.</text>
</comment>
<comment type="subcellular location">
    <subcellularLocation>
        <location evidence="1">Cytoplasm</location>
    </subcellularLocation>
</comment>
<comment type="similarity">
    <text evidence="1">Belongs to the urease gamma subunit family.</text>
</comment>
<gene>
    <name evidence="1" type="primary">ureA</name>
    <name type="ordered locus">RHE_CH03310</name>
</gene>
<reference key="1">
    <citation type="journal article" date="2006" name="Proc. Natl. Acad. Sci. U.S.A.">
        <title>The partitioned Rhizobium etli genome: genetic and metabolic redundancy in seven interacting replicons.</title>
        <authorList>
            <person name="Gonzalez V."/>
            <person name="Santamaria R.I."/>
            <person name="Bustos P."/>
            <person name="Hernandez-Gonzalez I."/>
            <person name="Medrano-Soto A."/>
            <person name="Moreno-Hagelsieb G."/>
            <person name="Janga S.C."/>
            <person name="Ramirez M.A."/>
            <person name="Jimenez-Jacinto V."/>
            <person name="Collado-Vides J."/>
            <person name="Davila G."/>
        </authorList>
    </citation>
    <scope>NUCLEOTIDE SEQUENCE [LARGE SCALE GENOMIC DNA]</scope>
    <source>
        <strain>ATCC 51251 / DSM 11541 / JCM 21823 / NBRC 15573 / CFN 42</strain>
    </source>
</reference>
<proteinExistence type="inferred from homology"/>
<protein>
    <recommendedName>
        <fullName evidence="1">Urease subunit gamma</fullName>
        <ecNumber evidence="1">3.5.1.5</ecNumber>
    </recommendedName>
    <alternativeName>
        <fullName evidence="1">Urea amidohydrolase subunit gamma</fullName>
    </alternativeName>
</protein>
<accession>Q2K512</accession>
<feature type="chain" id="PRO_0000239910" description="Urease subunit gamma">
    <location>
        <begin position="1"/>
        <end position="100"/>
    </location>
</feature>
<sequence length="100" mass="11104">MNLTPREKDKLLISMAAIVARRRLERGVKLNYPEAIALISDFVVEGARDGRPVAELMEAGAHVISRDQVMEGIAEMIHDVQVEATFPDGTKLVTVHEPIR</sequence>
<keyword id="KW-0963">Cytoplasm</keyword>
<keyword id="KW-0378">Hydrolase</keyword>
<keyword id="KW-1185">Reference proteome</keyword>